<name>VIPP1_ORYSJ</name>
<gene>
    <name evidence="1" type="primary">VIPP1</name>
    <name type="ordered locus">Os01g0895100</name>
    <name type="ordered locus">LOC_Os01g67000</name>
    <name type="ORF">B1078G07.38</name>
    <name evidence="6" type="ORF">OsJ_04390</name>
    <name type="ORF">P0696G06.15</name>
</gene>
<comment type="function">
    <text evidence="1">Required for plastid vesicle formation and thylakoid membrane biogenesis, but not for functional assembly of thylakoid protein complexes.</text>
</comment>
<comment type="subunit">
    <text evidence="1">Homomultimer. Complex formation involves interaction via the central alpha-helical domain (71-286).</text>
</comment>
<comment type="subunit">
    <text evidence="4">(Microbial infection) Interacts with the rice tungro bacilliform virus (RTBV) capsid protein (PubMed:15914861).</text>
</comment>
<comment type="subcellular location">
    <subcellularLocation>
        <location evidence="1">Plastid</location>
        <location evidence="1">Chloroplast inner membrane</location>
        <topology evidence="1">Peripheral membrane protein</topology>
    </subcellularLocation>
    <subcellularLocation>
        <location evidence="1">Plastid</location>
        <location evidence="1">Chloroplast thylakoid membrane</location>
        <topology evidence="1">Peripheral membrane protein</topology>
    </subcellularLocation>
</comment>
<comment type="similarity">
    <text evidence="5">Belongs to the PspA/Vipp/IM30 family.</text>
</comment>
<keyword id="KW-0150">Chloroplast</keyword>
<keyword id="KW-0175">Coiled coil</keyword>
<keyword id="KW-0945">Host-virus interaction</keyword>
<keyword id="KW-0472">Membrane</keyword>
<keyword id="KW-0934">Plastid</keyword>
<keyword id="KW-1001">Plastid inner membrane</keyword>
<keyword id="KW-1185">Reference proteome</keyword>
<keyword id="KW-0793">Thylakoid</keyword>
<keyword id="KW-0809">Transit peptide</keyword>
<reference key="1">
    <citation type="journal article" date="2002" name="Nature">
        <title>The genome sequence and structure of rice chromosome 1.</title>
        <authorList>
            <person name="Sasaki T."/>
            <person name="Matsumoto T."/>
            <person name="Yamamoto K."/>
            <person name="Sakata K."/>
            <person name="Baba T."/>
            <person name="Katayose Y."/>
            <person name="Wu J."/>
            <person name="Niimura Y."/>
            <person name="Cheng Z."/>
            <person name="Nagamura Y."/>
            <person name="Antonio B.A."/>
            <person name="Kanamori H."/>
            <person name="Hosokawa S."/>
            <person name="Masukawa M."/>
            <person name="Arikawa K."/>
            <person name="Chiden Y."/>
            <person name="Hayashi M."/>
            <person name="Okamoto M."/>
            <person name="Ando T."/>
            <person name="Aoki H."/>
            <person name="Arita K."/>
            <person name="Hamada M."/>
            <person name="Harada C."/>
            <person name="Hijishita S."/>
            <person name="Honda M."/>
            <person name="Ichikawa Y."/>
            <person name="Idonuma A."/>
            <person name="Iijima M."/>
            <person name="Ikeda M."/>
            <person name="Ikeno M."/>
            <person name="Ito S."/>
            <person name="Ito T."/>
            <person name="Ito Y."/>
            <person name="Ito Y."/>
            <person name="Iwabuchi A."/>
            <person name="Kamiya K."/>
            <person name="Karasawa W."/>
            <person name="Katagiri S."/>
            <person name="Kikuta A."/>
            <person name="Kobayashi N."/>
            <person name="Kono I."/>
            <person name="Machita K."/>
            <person name="Maehara T."/>
            <person name="Mizuno H."/>
            <person name="Mizubayashi T."/>
            <person name="Mukai Y."/>
            <person name="Nagasaki H."/>
            <person name="Nakashima M."/>
            <person name="Nakama Y."/>
            <person name="Nakamichi Y."/>
            <person name="Nakamura M."/>
            <person name="Namiki N."/>
            <person name="Negishi M."/>
            <person name="Ohta I."/>
            <person name="Ono N."/>
            <person name="Saji S."/>
            <person name="Sakai K."/>
            <person name="Shibata M."/>
            <person name="Shimokawa T."/>
            <person name="Shomura A."/>
            <person name="Song J."/>
            <person name="Takazaki Y."/>
            <person name="Terasawa K."/>
            <person name="Tsuji K."/>
            <person name="Waki K."/>
            <person name="Yamagata H."/>
            <person name="Yamane H."/>
            <person name="Yoshiki S."/>
            <person name="Yoshihara R."/>
            <person name="Yukawa K."/>
            <person name="Zhong H."/>
            <person name="Iwama H."/>
            <person name="Endo T."/>
            <person name="Ito H."/>
            <person name="Hahn J.H."/>
            <person name="Kim H.-I."/>
            <person name="Eun M.-Y."/>
            <person name="Yano M."/>
            <person name="Jiang J."/>
            <person name="Gojobori T."/>
        </authorList>
    </citation>
    <scope>NUCLEOTIDE SEQUENCE [LARGE SCALE GENOMIC DNA]</scope>
    <source>
        <strain>cv. Nipponbare</strain>
    </source>
</reference>
<reference key="2">
    <citation type="journal article" date="2005" name="Nature">
        <title>The map-based sequence of the rice genome.</title>
        <authorList>
            <consortium name="International rice genome sequencing project (IRGSP)"/>
        </authorList>
    </citation>
    <scope>NUCLEOTIDE SEQUENCE [LARGE SCALE GENOMIC DNA]</scope>
    <source>
        <strain>cv. Nipponbare</strain>
    </source>
</reference>
<reference key="3">
    <citation type="journal article" date="2008" name="Nucleic Acids Res.">
        <title>The rice annotation project database (RAP-DB): 2008 update.</title>
        <authorList>
            <consortium name="The rice annotation project (RAP)"/>
        </authorList>
    </citation>
    <scope>GENOME REANNOTATION</scope>
    <source>
        <strain>cv. Nipponbare</strain>
    </source>
</reference>
<reference key="4">
    <citation type="journal article" date="2013" name="Rice">
        <title>Improvement of the Oryza sativa Nipponbare reference genome using next generation sequence and optical map data.</title>
        <authorList>
            <person name="Kawahara Y."/>
            <person name="de la Bastide M."/>
            <person name="Hamilton J.P."/>
            <person name="Kanamori H."/>
            <person name="McCombie W.R."/>
            <person name="Ouyang S."/>
            <person name="Schwartz D.C."/>
            <person name="Tanaka T."/>
            <person name="Wu J."/>
            <person name="Zhou S."/>
            <person name="Childs K.L."/>
            <person name="Davidson R.M."/>
            <person name="Lin H."/>
            <person name="Quesada-Ocampo L."/>
            <person name="Vaillancourt B."/>
            <person name="Sakai H."/>
            <person name="Lee S.S."/>
            <person name="Kim J."/>
            <person name="Numa H."/>
            <person name="Itoh T."/>
            <person name="Buell C.R."/>
            <person name="Matsumoto T."/>
        </authorList>
    </citation>
    <scope>GENOME REANNOTATION</scope>
    <source>
        <strain>cv. Nipponbare</strain>
    </source>
</reference>
<reference key="5">
    <citation type="journal article" date="2005" name="PLoS Biol.">
        <title>The genomes of Oryza sativa: a history of duplications.</title>
        <authorList>
            <person name="Yu J."/>
            <person name="Wang J."/>
            <person name="Lin W."/>
            <person name="Li S."/>
            <person name="Li H."/>
            <person name="Zhou J."/>
            <person name="Ni P."/>
            <person name="Dong W."/>
            <person name="Hu S."/>
            <person name="Zeng C."/>
            <person name="Zhang J."/>
            <person name="Zhang Y."/>
            <person name="Li R."/>
            <person name="Xu Z."/>
            <person name="Li S."/>
            <person name="Li X."/>
            <person name="Zheng H."/>
            <person name="Cong L."/>
            <person name="Lin L."/>
            <person name="Yin J."/>
            <person name="Geng J."/>
            <person name="Li G."/>
            <person name="Shi J."/>
            <person name="Liu J."/>
            <person name="Lv H."/>
            <person name="Li J."/>
            <person name="Wang J."/>
            <person name="Deng Y."/>
            <person name="Ran L."/>
            <person name="Shi X."/>
            <person name="Wang X."/>
            <person name="Wu Q."/>
            <person name="Li C."/>
            <person name="Ren X."/>
            <person name="Wang J."/>
            <person name="Wang X."/>
            <person name="Li D."/>
            <person name="Liu D."/>
            <person name="Zhang X."/>
            <person name="Ji Z."/>
            <person name="Zhao W."/>
            <person name="Sun Y."/>
            <person name="Zhang Z."/>
            <person name="Bao J."/>
            <person name="Han Y."/>
            <person name="Dong L."/>
            <person name="Ji J."/>
            <person name="Chen P."/>
            <person name="Wu S."/>
            <person name="Liu J."/>
            <person name="Xiao Y."/>
            <person name="Bu D."/>
            <person name="Tan J."/>
            <person name="Yang L."/>
            <person name="Ye C."/>
            <person name="Zhang J."/>
            <person name="Xu J."/>
            <person name="Zhou Y."/>
            <person name="Yu Y."/>
            <person name="Zhang B."/>
            <person name="Zhuang S."/>
            <person name="Wei H."/>
            <person name="Liu B."/>
            <person name="Lei M."/>
            <person name="Yu H."/>
            <person name="Li Y."/>
            <person name="Xu H."/>
            <person name="Wei S."/>
            <person name="He X."/>
            <person name="Fang L."/>
            <person name="Zhang Z."/>
            <person name="Zhang Y."/>
            <person name="Huang X."/>
            <person name="Su Z."/>
            <person name="Tong W."/>
            <person name="Li J."/>
            <person name="Tong Z."/>
            <person name="Li S."/>
            <person name="Ye J."/>
            <person name="Wang L."/>
            <person name="Fang L."/>
            <person name="Lei T."/>
            <person name="Chen C.-S."/>
            <person name="Chen H.-C."/>
            <person name="Xu Z."/>
            <person name="Li H."/>
            <person name="Huang H."/>
            <person name="Zhang F."/>
            <person name="Xu H."/>
            <person name="Li N."/>
            <person name="Zhao C."/>
            <person name="Li S."/>
            <person name="Dong L."/>
            <person name="Huang Y."/>
            <person name="Li L."/>
            <person name="Xi Y."/>
            <person name="Qi Q."/>
            <person name="Li W."/>
            <person name="Zhang B."/>
            <person name="Hu W."/>
            <person name="Zhang Y."/>
            <person name="Tian X."/>
            <person name="Jiao Y."/>
            <person name="Liang X."/>
            <person name="Jin J."/>
            <person name="Gao L."/>
            <person name="Zheng W."/>
            <person name="Hao B."/>
            <person name="Liu S.-M."/>
            <person name="Wang W."/>
            <person name="Yuan L."/>
            <person name="Cao M."/>
            <person name="McDermott J."/>
            <person name="Samudrala R."/>
            <person name="Wang J."/>
            <person name="Wong G.K.-S."/>
            <person name="Yang H."/>
        </authorList>
    </citation>
    <scope>NUCLEOTIDE SEQUENCE [LARGE SCALE GENOMIC DNA]</scope>
    <source>
        <strain>cv. Nipponbare</strain>
    </source>
</reference>
<reference key="6">
    <citation type="journal article" date="2003" name="Science">
        <title>Collection, mapping, and annotation of over 28,000 cDNA clones from japonica rice.</title>
        <authorList>
            <consortium name="The rice full-length cDNA consortium"/>
        </authorList>
    </citation>
    <scope>NUCLEOTIDE SEQUENCE [LARGE SCALE MRNA]</scope>
    <source>
        <strain>cv. Nipponbare</strain>
    </source>
</reference>
<reference key="7">
    <citation type="journal article" date="2005" name="J. Gen. Virol.">
        <title>Coat proteins of Rice tungro bacilliform virus and Mungbean yellow mosaic virus contain multiple nuclear-localization signals and interact with importin alpha.</title>
        <authorList>
            <person name="Guerra-Peraza O."/>
            <person name="Kirk D."/>
            <person name="Seltzer V."/>
            <person name="Veluthambi K."/>
            <person name="Schmit A.C."/>
            <person name="Hohn T."/>
            <person name="Herzog E."/>
        </authorList>
    </citation>
    <scope>INTERACTION WITH RTBV CAPSID PROTEIN (MICROBIAL INFECTION)</scope>
</reference>
<evidence type="ECO:0000250" key="1">
    <source>
        <dbReference type="UniProtKB" id="O80796"/>
    </source>
</evidence>
<evidence type="ECO:0000255" key="2"/>
<evidence type="ECO:0000256" key="3">
    <source>
        <dbReference type="SAM" id="MobiDB-lite"/>
    </source>
</evidence>
<evidence type="ECO:0000269" key="4">
    <source>
    </source>
</evidence>
<evidence type="ECO:0000305" key="5"/>
<evidence type="ECO:0000312" key="6">
    <source>
        <dbReference type="EMBL" id="EAZ14468.1"/>
    </source>
</evidence>
<feature type="transit peptide" description="Chloroplast" evidence="2">
    <location>
        <begin position="1"/>
        <end status="unknown"/>
    </location>
</feature>
<feature type="chain" id="PRO_0000029849" description="Membrane-associated protein VIPP1, chloroplastic">
    <location>
        <begin status="unknown"/>
        <end position="317"/>
    </location>
</feature>
<feature type="region of interest" description="Disordered" evidence="3">
    <location>
        <begin position="265"/>
        <end position="317"/>
    </location>
</feature>
<feature type="coiled-coil region" evidence="2">
    <location>
        <begin position="92"/>
        <end position="246"/>
    </location>
</feature>
<feature type="compositionally biased region" description="Basic and acidic residues" evidence="3">
    <location>
        <begin position="297"/>
        <end position="317"/>
    </location>
</feature>
<protein>
    <recommendedName>
        <fullName evidence="1">Membrane-associated protein VIPP1, chloroplastic</fullName>
    </recommendedName>
    <alternativeName>
        <fullName>Probable membrane-associated 30 kDa protein, chloroplastic</fullName>
    </alternativeName>
    <alternativeName>
        <fullName evidence="1">Protein VESICLE-INDUCING PROTEIN IN PLASTIDS 1</fullName>
    </alternativeName>
</protein>
<accession>Q8S0J7</accession>
<accession>Q0JGZ1</accession>
<dbReference type="EMBL" id="AP003316">
    <property type="protein sequence ID" value="BAC06258.1"/>
    <property type="molecule type" value="Genomic_DNA"/>
</dbReference>
<dbReference type="EMBL" id="AP003407">
    <property type="protein sequence ID" value="BAB90216.1"/>
    <property type="molecule type" value="Genomic_DNA"/>
</dbReference>
<dbReference type="EMBL" id="AP008207">
    <property type="protein sequence ID" value="BAF06987.1"/>
    <property type="molecule type" value="Genomic_DNA"/>
</dbReference>
<dbReference type="EMBL" id="AP014957">
    <property type="protein sequence ID" value="BAS75695.1"/>
    <property type="molecule type" value="Genomic_DNA"/>
</dbReference>
<dbReference type="EMBL" id="CM000138">
    <property type="protein sequence ID" value="EAZ14468.1"/>
    <property type="molecule type" value="Genomic_DNA"/>
</dbReference>
<dbReference type="EMBL" id="AK058611">
    <property type="protein sequence ID" value="BAG86752.1"/>
    <property type="molecule type" value="mRNA"/>
</dbReference>
<dbReference type="EMBL" id="AK067698">
    <property type="protein sequence ID" value="BAG90547.1"/>
    <property type="molecule type" value="mRNA"/>
</dbReference>
<dbReference type="RefSeq" id="NP_001383800.1">
    <property type="nucleotide sequence ID" value="NM_001396871.1"/>
</dbReference>
<dbReference type="RefSeq" id="XP_015615370.1">
    <property type="nucleotide sequence ID" value="XM_015759884.1"/>
</dbReference>
<dbReference type="SMR" id="Q8S0J7"/>
<dbReference type="FunCoup" id="Q8S0J7">
    <property type="interactions" value="1116"/>
</dbReference>
<dbReference type="STRING" id="39947.Q8S0J7"/>
<dbReference type="PaxDb" id="39947-Q8S0J7"/>
<dbReference type="EnsemblPlants" id="Os01t0895100-01">
    <property type="protein sequence ID" value="Os01t0895100-01"/>
    <property type="gene ID" value="Os01g0895100"/>
</dbReference>
<dbReference type="EnsemblPlants" id="Os01t0895100-02">
    <property type="protein sequence ID" value="Os01t0895100-02"/>
    <property type="gene ID" value="Os01g0895100"/>
</dbReference>
<dbReference type="GeneID" id="4324967"/>
<dbReference type="Gramene" id="Os01t0895100-01">
    <property type="protein sequence ID" value="Os01t0895100-01"/>
    <property type="gene ID" value="Os01g0895100"/>
</dbReference>
<dbReference type="Gramene" id="Os01t0895100-02">
    <property type="protein sequence ID" value="Os01t0895100-02"/>
    <property type="gene ID" value="Os01g0895100"/>
</dbReference>
<dbReference type="KEGG" id="dosa:Os01g0895100"/>
<dbReference type="eggNOG" id="ENOG502QSHK">
    <property type="taxonomic scope" value="Eukaryota"/>
</dbReference>
<dbReference type="HOGENOM" id="CLU_056466_0_0_1"/>
<dbReference type="InParanoid" id="Q8S0J7"/>
<dbReference type="OMA" id="MIFRAKA"/>
<dbReference type="OrthoDB" id="434485at2759"/>
<dbReference type="Proteomes" id="UP000000763">
    <property type="component" value="Chromosome 1"/>
</dbReference>
<dbReference type="Proteomes" id="UP000007752">
    <property type="component" value="Chromosome 1"/>
</dbReference>
<dbReference type="Proteomes" id="UP000059680">
    <property type="component" value="Chromosome 1"/>
</dbReference>
<dbReference type="GO" id="GO:0009706">
    <property type="term" value="C:chloroplast inner membrane"/>
    <property type="evidence" value="ECO:0007669"/>
    <property type="project" value="UniProtKB-SubCell"/>
</dbReference>
<dbReference type="GO" id="GO:0009535">
    <property type="term" value="C:chloroplast thylakoid membrane"/>
    <property type="evidence" value="ECO:0007669"/>
    <property type="project" value="UniProtKB-SubCell"/>
</dbReference>
<dbReference type="GO" id="GO:0010027">
    <property type="term" value="P:thylakoid membrane organization"/>
    <property type="evidence" value="ECO:0007669"/>
    <property type="project" value="EnsemblPlants"/>
</dbReference>
<dbReference type="GO" id="GO:0016050">
    <property type="term" value="P:vesicle organization"/>
    <property type="evidence" value="ECO:0007669"/>
    <property type="project" value="EnsemblPlants"/>
</dbReference>
<dbReference type="InterPro" id="IPR007157">
    <property type="entry name" value="PspA_VIPP1"/>
</dbReference>
<dbReference type="PANTHER" id="PTHR31088">
    <property type="entry name" value="MEMBRANE-ASSOCIATED PROTEIN VIPP1, CHLOROPLASTIC"/>
    <property type="match status" value="1"/>
</dbReference>
<dbReference type="PANTHER" id="PTHR31088:SF6">
    <property type="entry name" value="PHAGE SHOCK PROTEIN A"/>
    <property type="match status" value="1"/>
</dbReference>
<dbReference type="Pfam" id="PF04012">
    <property type="entry name" value="PspA_IM30"/>
    <property type="match status" value="1"/>
</dbReference>
<organism>
    <name type="scientific">Oryza sativa subsp. japonica</name>
    <name type="common">Rice</name>
    <dbReference type="NCBI Taxonomy" id="39947"/>
    <lineage>
        <taxon>Eukaryota</taxon>
        <taxon>Viridiplantae</taxon>
        <taxon>Streptophyta</taxon>
        <taxon>Embryophyta</taxon>
        <taxon>Tracheophyta</taxon>
        <taxon>Spermatophyta</taxon>
        <taxon>Magnoliopsida</taxon>
        <taxon>Liliopsida</taxon>
        <taxon>Poales</taxon>
        <taxon>Poaceae</taxon>
        <taxon>BOP clade</taxon>
        <taxon>Oryzoideae</taxon>
        <taxon>Oryzeae</taxon>
        <taxon>Oryzinae</taxon>
        <taxon>Oryza</taxon>
        <taxon>Oryza sativa</taxon>
    </lineage>
</organism>
<proteinExistence type="evidence at protein level"/>
<sequence>MEIRAPPTSLRLAPPPPASASFRRTALRTSFLNGSVSLRLIQVRQSNVNRFKCNGIRSNLLDRFSRVVKSYANAVLSSFEDPEKILDQAVLEMNDDLTKMRQATAQVLASQKRLENKYKAAEQASDDWYRRAQLALQKGDEDLAREALKRRKSYADNASSLKAQLDQQKGVVENLVSNTRVLESKIAEAKQKKDTLKARAQSAKTSTKVSEMLGNVNTSGALSAFEKMEEKVMAMESQAEALGQLATDDLEGKFALLETSSVDDDLAQMKKEISGSSSKGELPPGRTAVSNSGAARPFRDIEIENELNELRKKANEY</sequence>